<gene>
    <name type="primary">NOP16</name>
</gene>
<comment type="subcellular location">
    <subcellularLocation>
        <location evidence="1">Nucleus</location>
        <location evidence="1">Nucleolus</location>
    </subcellularLocation>
</comment>
<comment type="similarity">
    <text evidence="3">Belongs to the NOP16 family.</text>
</comment>
<name>NOP16_BOVIN</name>
<organism>
    <name type="scientific">Bos taurus</name>
    <name type="common">Bovine</name>
    <dbReference type="NCBI Taxonomy" id="9913"/>
    <lineage>
        <taxon>Eukaryota</taxon>
        <taxon>Metazoa</taxon>
        <taxon>Chordata</taxon>
        <taxon>Craniata</taxon>
        <taxon>Vertebrata</taxon>
        <taxon>Euteleostomi</taxon>
        <taxon>Mammalia</taxon>
        <taxon>Eutheria</taxon>
        <taxon>Laurasiatheria</taxon>
        <taxon>Artiodactyla</taxon>
        <taxon>Ruminantia</taxon>
        <taxon>Pecora</taxon>
        <taxon>Bovidae</taxon>
        <taxon>Bovinae</taxon>
        <taxon>Bos</taxon>
    </lineage>
</organism>
<accession>Q5E996</accession>
<accession>A4IF95</accession>
<protein>
    <recommendedName>
        <fullName>Nucleolar protein 16</fullName>
    </recommendedName>
</protein>
<reference key="1">
    <citation type="journal article" date="2005" name="BMC Genomics">
        <title>Characterization of 954 bovine full-CDS cDNA sequences.</title>
        <authorList>
            <person name="Harhay G.P."/>
            <person name="Sonstegard T.S."/>
            <person name="Keele J.W."/>
            <person name="Heaton M.P."/>
            <person name="Clawson M.L."/>
            <person name="Snelling W.M."/>
            <person name="Wiedmann R.T."/>
            <person name="Van Tassell C.P."/>
            <person name="Smith T.P.L."/>
        </authorList>
    </citation>
    <scope>NUCLEOTIDE SEQUENCE [LARGE SCALE MRNA]</scope>
</reference>
<reference key="2">
    <citation type="submission" date="2007-03" db="EMBL/GenBank/DDBJ databases">
        <authorList>
            <consortium name="NIH - Mammalian Gene Collection (MGC) project"/>
        </authorList>
    </citation>
    <scope>NUCLEOTIDE SEQUENCE [LARGE SCALE MRNA]</scope>
    <source>
        <strain>Hereford</strain>
        <tissue>Thymus</tissue>
    </source>
</reference>
<evidence type="ECO:0000250" key="1"/>
<evidence type="ECO:0000250" key="2">
    <source>
        <dbReference type="UniProtKB" id="Q9Y3C1"/>
    </source>
</evidence>
<evidence type="ECO:0000305" key="3"/>
<sequence>MPKAKGKTRRQKFGYNVNRKRLNRNARRKAAPRIECSHIRHAWDQTKSVRQNLAEMGLAMDPNRAVPLLKRKVKAMEVDVEERPKELVRKPYVLNDLEAEASLPEKKGNTLSRDLIDYVRYMVENHGENYKAMARDEKNYYQDTPKQIRNKINVYKRFYPAEWQAFTDSLQKNKMEVE</sequence>
<keyword id="KW-0007">Acetylation</keyword>
<keyword id="KW-1017">Isopeptide bond</keyword>
<keyword id="KW-0539">Nucleus</keyword>
<keyword id="KW-0597">Phosphoprotein</keyword>
<keyword id="KW-1185">Reference proteome</keyword>
<keyword id="KW-0832">Ubl conjugation</keyword>
<dbReference type="EMBL" id="BT021024">
    <property type="protein sequence ID" value="AAX09041.1"/>
    <property type="molecule type" value="mRNA"/>
</dbReference>
<dbReference type="EMBL" id="BC134466">
    <property type="protein sequence ID" value="AAI34467.1"/>
    <property type="molecule type" value="mRNA"/>
</dbReference>
<dbReference type="RefSeq" id="NP_001014856.1">
    <property type="nucleotide sequence ID" value="NM_001014856.1"/>
</dbReference>
<dbReference type="SMR" id="Q5E996"/>
<dbReference type="FunCoup" id="Q5E996">
    <property type="interactions" value="2140"/>
</dbReference>
<dbReference type="STRING" id="9913.ENSBTAP00000014212"/>
<dbReference type="PaxDb" id="9913-ENSBTAP00000014212"/>
<dbReference type="Ensembl" id="ENSBTAT00000123936.1">
    <property type="protein sequence ID" value="ENSBTAP00000082497.1"/>
    <property type="gene ID" value="ENSBTAG00000010734.6"/>
</dbReference>
<dbReference type="GeneID" id="506421"/>
<dbReference type="KEGG" id="bta:506421"/>
<dbReference type="CTD" id="51491"/>
<dbReference type="VEuPathDB" id="HostDB:ENSBTAG00000010734"/>
<dbReference type="VGNC" id="VGNC:32166">
    <property type="gene designation" value="NOP16"/>
</dbReference>
<dbReference type="eggNOG" id="KOG4706">
    <property type="taxonomic scope" value="Eukaryota"/>
</dbReference>
<dbReference type="GeneTree" id="ENSGT00390000003426"/>
<dbReference type="HOGENOM" id="CLU_115103_0_0_1"/>
<dbReference type="InParanoid" id="Q5E996"/>
<dbReference type="OMA" id="IDYVKHM"/>
<dbReference type="OrthoDB" id="285729at2759"/>
<dbReference type="TreeFam" id="TF323541"/>
<dbReference type="Proteomes" id="UP000009136">
    <property type="component" value="Chromosome 7"/>
</dbReference>
<dbReference type="Bgee" id="ENSBTAG00000010734">
    <property type="expression patterns" value="Expressed in pharyngeal tonsil and 106 other cell types or tissues"/>
</dbReference>
<dbReference type="GO" id="GO:0005730">
    <property type="term" value="C:nucleolus"/>
    <property type="evidence" value="ECO:0000318"/>
    <property type="project" value="GO_Central"/>
</dbReference>
<dbReference type="GO" id="GO:0042273">
    <property type="term" value="P:ribosomal large subunit biogenesis"/>
    <property type="evidence" value="ECO:0000318"/>
    <property type="project" value="GO_Central"/>
</dbReference>
<dbReference type="InterPro" id="IPR019002">
    <property type="entry name" value="Ribosome_biogenesis_Nop16"/>
</dbReference>
<dbReference type="PANTHER" id="PTHR13243">
    <property type="entry name" value="HSPC111 PROTEIN-RELATED"/>
    <property type="match status" value="1"/>
</dbReference>
<dbReference type="PANTHER" id="PTHR13243:SF1">
    <property type="entry name" value="NUCLEOLAR PROTEIN 16"/>
    <property type="match status" value="1"/>
</dbReference>
<dbReference type="Pfam" id="PF09420">
    <property type="entry name" value="Nop16"/>
    <property type="match status" value="2"/>
</dbReference>
<feature type="chain" id="PRO_0000250157" description="Nucleolar protein 16">
    <location>
        <begin position="1"/>
        <end position="178"/>
    </location>
</feature>
<feature type="modified residue" description="Phosphothreonine" evidence="2">
    <location>
        <position position="8"/>
    </location>
</feature>
<feature type="modified residue" description="N6-acetyllysine" evidence="2">
    <location>
        <position position="90"/>
    </location>
</feature>
<feature type="modified residue" description="Phosphothreonine" evidence="2">
    <location>
        <position position="144"/>
    </location>
</feature>
<feature type="cross-link" description="Glycyl lysine isopeptide (Lys-Gly) (interchain with G-Cter in SUMO2)" evidence="2">
    <location>
        <position position="74"/>
    </location>
</feature>
<proteinExistence type="evidence at transcript level"/>